<reference key="1">
    <citation type="journal article" date="2011" name="J. Bacteriol.">
        <title>Complete genome sequence of the plant growth-promoting endophyte Burkholderia phytofirmans strain PsJN.</title>
        <authorList>
            <person name="Weilharter A."/>
            <person name="Mitter B."/>
            <person name="Shin M.V."/>
            <person name="Chain P.S."/>
            <person name="Nowak J."/>
            <person name="Sessitsch A."/>
        </authorList>
    </citation>
    <scope>NUCLEOTIDE SEQUENCE [LARGE SCALE GENOMIC DNA]</scope>
    <source>
        <strain>DSM 17436 / LMG 22146 / PsJN</strain>
    </source>
</reference>
<name>RUVB_PARPJ</name>
<keyword id="KW-0067">ATP-binding</keyword>
<keyword id="KW-0963">Cytoplasm</keyword>
<keyword id="KW-0227">DNA damage</keyword>
<keyword id="KW-0233">DNA recombination</keyword>
<keyword id="KW-0234">DNA repair</keyword>
<keyword id="KW-0238">DNA-binding</keyword>
<keyword id="KW-0378">Hydrolase</keyword>
<keyword id="KW-0547">Nucleotide-binding</keyword>
<protein>
    <recommendedName>
        <fullName evidence="1">Holliday junction branch migration complex subunit RuvB</fullName>
        <ecNumber evidence="1">3.6.4.-</ecNumber>
    </recommendedName>
</protein>
<accession>B2SYK2</accession>
<organism>
    <name type="scientific">Paraburkholderia phytofirmans (strain DSM 17436 / LMG 22146 / PsJN)</name>
    <name type="common">Burkholderia phytofirmans</name>
    <dbReference type="NCBI Taxonomy" id="398527"/>
    <lineage>
        <taxon>Bacteria</taxon>
        <taxon>Pseudomonadati</taxon>
        <taxon>Pseudomonadota</taxon>
        <taxon>Betaproteobacteria</taxon>
        <taxon>Burkholderiales</taxon>
        <taxon>Burkholderiaceae</taxon>
        <taxon>Paraburkholderia</taxon>
    </lineage>
</organism>
<dbReference type="EC" id="3.6.4.-" evidence="1"/>
<dbReference type="EMBL" id="CP001052">
    <property type="protein sequence ID" value="ACD17737.1"/>
    <property type="molecule type" value="Genomic_DNA"/>
</dbReference>
<dbReference type="RefSeq" id="WP_012434304.1">
    <property type="nucleotide sequence ID" value="NC_010681.1"/>
</dbReference>
<dbReference type="SMR" id="B2SYK2"/>
<dbReference type="STRING" id="398527.Bphyt_3346"/>
<dbReference type="KEGG" id="bpy:Bphyt_3346"/>
<dbReference type="eggNOG" id="COG2255">
    <property type="taxonomic scope" value="Bacteria"/>
</dbReference>
<dbReference type="HOGENOM" id="CLU_055599_1_0_4"/>
<dbReference type="OrthoDB" id="9804478at2"/>
<dbReference type="Proteomes" id="UP000001739">
    <property type="component" value="Chromosome 1"/>
</dbReference>
<dbReference type="GO" id="GO:0005737">
    <property type="term" value="C:cytoplasm"/>
    <property type="evidence" value="ECO:0007669"/>
    <property type="project" value="UniProtKB-SubCell"/>
</dbReference>
<dbReference type="GO" id="GO:0048476">
    <property type="term" value="C:Holliday junction resolvase complex"/>
    <property type="evidence" value="ECO:0007669"/>
    <property type="project" value="UniProtKB-UniRule"/>
</dbReference>
<dbReference type="GO" id="GO:0005524">
    <property type="term" value="F:ATP binding"/>
    <property type="evidence" value="ECO:0007669"/>
    <property type="project" value="UniProtKB-UniRule"/>
</dbReference>
<dbReference type="GO" id="GO:0016887">
    <property type="term" value="F:ATP hydrolysis activity"/>
    <property type="evidence" value="ECO:0007669"/>
    <property type="project" value="InterPro"/>
</dbReference>
<dbReference type="GO" id="GO:0000400">
    <property type="term" value="F:four-way junction DNA binding"/>
    <property type="evidence" value="ECO:0007669"/>
    <property type="project" value="UniProtKB-UniRule"/>
</dbReference>
<dbReference type="GO" id="GO:0009378">
    <property type="term" value="F:four-way junction helicase activity"/>
    <property type="evidence" value="ECO:0007669"/>
    <property type="project" value="InterPro"/>
</dbReference>
<dbReference type="GO" id="GO:0006310">
    <property type="term" value="P:DNA recombination"/>
    <property type="evidence" value="ECO:0007669"/>
    <property type="project" value="UniProtKB-UniRule"/>
</dbReference>
<dbReference type="GO" id="GO:0006281">
    <property type="term" value="P:DNA repair"/>
    <property type="evidence" value="ECO:0007669"/>
    <property type="project" value="UniProtKB-UniRule"/>
</dbReference>
<dbReference type="CDD" id="cd00009">
    <property type="entry name" value="AAA"/>
    <property type="match status" value="1"/>
</dbReference>
<dbReference type="FunFam" id="1.10.10.10:FF:000086">
    <property type="entry name" value="Holliday junction ATP-dependent DNA helicase RuvB"/>
    <property type="match status" value="1"/>
</dbReference>
<dbReference type="FunFam" id="1.10.8.60:FF:000023">
    <property type="entry name" value="Holliday junction ATP-dependent DNA helicase RuvB"/>
    <property type="match status" value="1"/>
</dbReference>
<dbReference type="FunFam" id="3.40.50.300:FF:000073">
    <property type="entry name" value="Holliday junction ATP-dependent DNA helicase RuvB"/>
    <property type="match status" value="1"/>
</dbReference>
<dbReference type="Gene3D" id="1.10.8.60">
    <property type="match status" value="1"/>
</dbReference>
<dbReference type="Gene3D" id="3.40.50.300">
    <property type="entry name" value="P-loop containing nucleotide triphosphate hydrolases"/>
    <property type="match status" value="1"/>
</dbReference>
<dbReference type="Gene3D" id="1.10.10.10">
    <property type="entry name" value="Winged helix-like DNA-binding domain superfamily/Winged helix DNA-binding domain"/>
    <property type="match status" value="1"/>
</dbReference>
<dbReference type="HAMAP" id="MF_00016">
    <property type="entry name" value="DNA_HJ_migration_RuvB"/>
    <property type="match status" value="1"/>
</dbReference>
<dbReference type="InterPro" id="IPR003593">
    <property type="entry name" value="AAA+_ATPase"/>
</dbReference>
<dbReference type="InterPro" id="IPR041445">
    <property type="entry name" value="AAA_lid_4"/>
</dbReference>
<dbReference type="InterPro" id="IPR004605">
    <property type="entry name" value="DNA_helicase_Holl-junc_RuvB"/>
</dbReference>
<dbReference type="InterPro" id="IPR027417">
    <property type="entry name" value="P-loop_NTPase"/>
</dbReference>
<dbReference type="InterPro" id="IPR008824">
    <property type="entry name" value="RuvB-like_N"/>
</dbReference>
<dbReference type="InterPro" id="IPR008823">
    <property type="entry name" value="RuvB_C"/>
</dbReference>
<dbReference type="InterPro" id="IPR036388">
    <property type="entry name" value="WH-like_DNA-bd_sf"/>
</dbReference>
<dbReference type="InterPro" id="IPR036390">
    <property type="entry name" value="WH_DNA-bd_sf"/>
</dbReference>
<dbReference type="NCBIfam" id="NF000868">
    <property type="entry name" value="PRK00080.1"/>
    <property type="match status" value="1"/>
</dbReference>
<dbReference type="NCBIfam" id="TIGR00635">
    <property type="entry name" value="ruvB"/>
    <property type="match status" value="1"/>
</dbReference>
<dbReference type="PANTHER" id="PTHR42848">
    <property type="match status" value="1"/>
</dbReference>
<dbReference type="PANTHER" id="PTHR42848:SF1">
    <property type="entry name" value="HOLLIDAY JUNCTION BRANCH MIGRATION COMPLEX SUBUNIT RUVB"/>
    <property type="match status" value="1"/>
</dbReference>
<dbReference type="Pfam" id="PF17864">
    <property type="entry name" value="AAA_lid_4"/>
    <property type="match status" value="1"/>
</dbReference>
<dbReference type="Pfam" id="PF05491">
    <property type="entry name" value="RuvB_C"/>
    <property type="match status" value="1"/>
</dbReference>
<dbReference type="Pfam" id="PF05496">
    <property type="entry name" value="RuvB_N"/>
    <property type="match status" value="1"/>
</dbReference>
<dbReference type="SMART" id="SM00382">
    <property type="entry name" value="AAA"/>
    <property type="match status" value="1"/>
</dbReference>
<dbReference type="SUPFAM" id="SSF52540">
    <property type="entry name" value="P-loop containing nucleoside triphosphate hydrolases"/>
    <property type="match status" value="1"/>
</dbReference>
<dbReference type="SUPFAM" id="SSF46785">
    <property type="entry name" value="Winged helix' DNA-binding domain"/>
    <property type="match status" value="1"/>
</dbReference>
<feature type="chain" id="PRO_1000089625" description="Holliday junction branch migration complex subunit RuvB">
    <location>
        <begin position="1"/>
        <end position="354"/>
    </location>
</feature>
<feature type="region of interest" description="Large ATPase domain (RuvB-L)" evidence="1">
    <location>
        <begin position="4"/>
        <end position="190"/>
    </location>
</feature>
<feature type="region of interest" description="Small ATPAse domain (RuvB-S)" evidence="1">
    <location>
        <begin position="191"/>
        <end position="261"/>
    </location>
</feature>
<feature type="region of interest" description="Head domain (RuvB-H)" evidence="1">
    <location>
        <begin position="264"/>
        <end position="354"/>
    </location>
</feature>
<feature type="binding site" evidence="1">
    <location>
        <position position="29"/>
    </location>
    <ligand>
        <name>ATP</name>
        <dbReference type="ChEBI" id="CHEBI:30616"/>
    </ligand>
</feature>
<feature type="binding site" evidence="1">
    <location>
        <position position="30"/>
    </location>
    <ligand>
        <name>ATP</name>
        <dbReference type="ChEBI" id="CHEBI:30616"/>
    </ligand>
</feature>
<feature type="binding site" evidence="1">
    <location>
        <position position="71"/>
    </location>
    <ligand>
        <name>ATP</name>
        <dbReference type="ChEBI" id="CHEBI:30616"/>
    </ligand>
</feature>
<feature type="binding site" evidence="1">
    <location>
        <position position="74"/>
    </location>
    <ligand>
        <name>ATP</name>
        <dbReference type="ChEBI" id="CHEBI:30616"/>
    </ligand>
</feature>
<feature type="binding site" evidence="1">
    <location>
        <position position="75"/>
    </location>
    <ligand>
        <name>ATP</name>
        <dbReference type="ChEBI" id="CHEBI:30616"/>
    </ligand>
</feature>
<feature type="binding site" evidence="1">
    <location>
        <position position="75"/>
    </location>
    <ligand>
        <name>Mg(2+)</name>
        <dbReference type="ChEBI" id="CHEBI:18420"/>
    </ligand>
</feature>
<feature type="binding site" evidence="1">
    <location>
        <position position="76"/>
    </location>
    <ligand>
        <name>ATP</name>
        <dbReference type="ChEBI" id="CHEBI:30616"/>
    </ligand>
</feature>
<feature type="binding site" evidence="1">
    <location>
        <begin position="137"/>
        <end position="139"/>
    </location>
    <ligand>
        <name>ATP</name>
        <dbReference type="ChEBI" id="CHEBI:30616"/>
    </ligand>
</feature>
<feature type="binding site" evidence="1">
    <location>
        <position position="180"/>
    </location>
    <ligand>
        <name>ATP</name>
        <dbReference type="ChEBI" id="CHEBI:30616"/>
    </ligand>
</feature>
<feature type="binding site" evidence="1">
    <location>
        <position position="190"/>
    </location>
    <ligand>
        <name>ATP</name>
        <dbReference type="ChEBI" id="CHEBI:30616"/>
    </ligand>
</feature>
<feature type="binding site" evidence="1">
    <location>
        <position position="227"/>
    </location>
    <ligand>
        <name>ATP</name>
        <dbReference type="ChEBI" id="CHEBI:30616"/>
    </ligand>
</feature>
<feature type="binding site" evidence="1">
    <location>
        <position position="300"/>
    </location>
    <ligand>
        <name>DNA</name>
        <dbReference type="ChEBI" id="CHEBI:16991"/>
    </ligand>
</feature>
<feature type="binding site" evidence="1">
    <location>
        <position position="319"/>
    </location>
    <ligand>
        <name>DNA</name>
        <dbReference type="ChEBI" id="CHEBI:16991"/>
    </ligand>
</feature>
<feature type="binding site" evidence="1">
    <location>
        <position position="324"/>
    </location>
    <ligand>
        <name>DNA</name>
        <dbReference type="ChEBI" id="CHEBI:16991"/>
    </ligand>
</feature>
<gene>
    <name evidence="1" type="primary">ruvB</name>
    <name type="ordered locus">Bphyt_3346</name>
</gene>
<comment type="function">
    <text evidence="1">The RuvA-RuvB-RuvC complex processes Holliday junction (HJ) DNA during genetic recombination and DNA repair, while the RuvA-RuvB complex plays an important role in the rescue of blocked DNA replication forks via replication fork reversal (RFR). RuvA specifically binds to HJ cruciform DNA, conferring on it an open structure. The RuvB hexamer acts as an ATP-dependent pump, pulling dsDNA into and through the RuvAB complex. RuvB forms 2 homohexamers on either side of HJ DNA bound by 1 or 2 RuvA tetramers; 4 subunits per hexamer contact DNA at a time. Coordinated motions by a converter formed by DNA-disengaged RuvB subunits stimulates ATP hydrolysis and nucleotide exchange. Immobilization of the converter enables RuvB to convert the ATP-contained energy into a lever motion, pulling 2 nucleotides of DNA out of the RuvA tetramer per ATP hydrolyzed, thus driving DNA branch migration. The RuvB motors rotate together with the DNA substrate, which together with the progressing nucleotide cycle form the mechanistic basis for DNA recombination by continuous HJ branch migration. Branch migration allows RuvC to scan DNA until it finds its consensus sequence, where it cleaves and resolves cruciform DNA.</text>
</comment>
<comment type="catalytic activity">
    <reaction evidence="1">
        <text>ATP + H2O = ADP + phosphate + H(+)</text>
        <dbReference type="Rhea" id="RHEA:13065"/>
        <dbReference type="ChEBI" id="CHEBI:15377"/>
        <dbReference type="ChEBI" id="CHEBI:15378"/>
        <dbReference type="ChEBI" id="CHEBI:30616"/>
        <dbReference type="ChEBI" id="CHEBI:43474"/>
        <dbReference type="ChEBI" id="CHEBI:456216"/>
    </reaction>
</comment>
<comment type="subunit">
    <text evidence="1">Homohexamer. Forms an RuvA(8)-RuvB(12)-Holliday junction (HJ) complex. HJ DNA is sandwiched between 2 RuvA tetramers; dsDNA enters through RuvA and exits via RuvB. An RuvB hexamer assembles on each DNA strand where it exits the tetramer. Each RuvB hexamer is contacted by two RuvA subunits (via domain III) on 2 adjacent RuvB subunits; this complex drives branch migration. In the full resolvosome a probable DNA-RuvA(4)-RuvB(12)-RuvC(2) complex forms which resolves the HJ.</text>
</comment>
<comment type="subcellular location">
    <subcellularLocation>
        <location evidence="1">Cytoplasm</location>
    </subcellularLocation>
</comment>
<comment type="domain">
    <text evidence="1">Has 3 domains, the large (RuvB-L) and small ATPase (RuvB-S) domains and the C-terminal head (RuvB-H) domain. The head domain binds DNA, while the ATPase domains jointly bind ATP, ADP or are empty depending on the state of the subunit in the translocation cycle. During a single DNA translocation step the structure of each domain remains the same, but their relative positions change.</text>
</comment>
<comment type="similarity">
    <text evidence="1">Belongs to the RuvB family.</text>
</comment>
<sequence length="354" mass="38872">MIETDKLAAERIIAATPVSPNEEAFERALRPRQLEEYVGQEKVRGQLEIFIEAAKRRSESLDHVLLFGPPGLGKTTLAHIIAREMGVNLRQTSGPVLERAGDLAALLTNLEANDVLFIDEIHRLSPVVEEILYPALEDYQIDIMIGEGPAARSVKLDLQPFTLVGATTRAGMLTNPLRDRFGIVARLEFYNAEELARIVTRSASLLNAQIHPDGAFEIAKRARGTPRIANRLLRRVRDFAEVKADGNITAQVADAALKMLDVDAVGFDLMDRKLLEAILHKFDGGPVGVDNLAAAIGEERDTIEDVLEPYLIQQGFLQRTPRGRVATLLTYRHFGLAAPDSSSGLPGLWDSAAT</sequence>
<evidence type="ECO:0000255" key="1">
    <source>
        <dbReference type="HAMAP-Rule" id="MF_00016"/>
    </source>
</evidence>
<proteinExistence type="inferred from homology"/>